<evidence type="ECO:0000250" key="1"/>
<evidence type="ECO:0000305" key="2"/>
<evidence type="ECO:0007744" key="3">
    <source>
    </source>
</evidence>
<reference key="1">
    <citation type="journal article" date="1999" name="Nature">
        <title>Sequence and analysis of chromosome 2 of the plant Arabidopsis thaliana.</title>
        <authorList>
            <person name="Lin X."/>
            <person name="Kaul S."/>
            <person name="Rounsley S.D."/>
            <person name="Shea T.P."/>
            <person name="Benito M.-I."/>
            <person name="Town C.D."/>
            <person name="Fujii C.Y."/>
            <person name="Mason T.M."/>
            <person name="Bowman C.L."/>
            <person name="Barnstead M.E."/>
            <person name="Feldblyum T.V."/>
            <person name="Buell C.R."/>
            <person name="Ketchum K.A."/>
            <person name="Lee J.J."/>
            <person name="Ronning C.M."/>
            <person name="Koo H.L."/>
            <person name="Moffat K.S."/>
            <person name="Cronin L.A."/>
            <person name="Shen M."/>
            <person name="Pai G."/>
            <person name="Van Aken S."/>
            <person name="Umayam L."/>
            <person name="Tallon L.J."/>
            <person name="Gill J.E."/>
            <person name="Adams M.D."/>
            <person name="Carrera A.J."/>
            <person name="Creasy T.H."/>
            <person name="Goodman H.M."/>
            <person name="Somerville C.R."/>
            <person name="Copenhaver G.P."/>
            <person name="Preuss D."/>
            <person name="Nierman W.C."/>
            <person name="White O."/>
            <person name="Eisen J.A."/>
            <person name="Salzberg S.L."/>
            <person name="Fraser C.M."/>
            <person name="Venter J.C."/>
        </authorList>
    </citation>
    <scope>NUCLEOTIDE SEQUENCE [LARGE SCALE GENOMIC DNA]</scope>
    <source>
        <strain>cv. Columbia</strain>
    </source>
</reference>
<reference key="2">
    <citation type="journal article" date="2017" name="Plant J.">
        <title>Araport11: a complete reannotation of the Arabidopsis thaliana reference genome.</title>
        <authorList>
            <person name="Cheng C.Y."/>
            <person name="Krishnakumar V."/>
            <person name="Chan A.P."/>
            <person name="Thibaud-Nissen F."/>
            <person name="Schobel S."/>
            <person name="Town C.D."/>
        </authorList>
    </citation>
    <scope>GENOME REANNOTATION</scope>
    <source>
        <strain>cv. Columbia</strain>
    </source>
</reference>
<reference key="3">
    <citation type="journal article" date="2003" name="Science">
        <title>Empirical analysis of transcriptional activity in the Arabidopsis genome.</title>
        <authorList>
            <person name="Yamada K."/>
            <person name="Lim J."/>
            <person name="Dale J.M."/>
            <person name="Chen H."/>
            <person name="Shinn P."/>
            <person name="Palm C.J."/>
            <person name="Southwick A.M."/>
            <person name="Wu H.C."/>
            <person name="Kim C.J."/>
            <person name="Nguyen M."/>
            <person name="Pham P.K."/>
            <person name="Cheuk R.F."/>
            <person name="Karlin-Newmann G."/>
            <person name="Liu S.X."/>
            <person name="Lam B."/>
            <person name="Sakano H."/>
            <person name="Wu T."/>
            <person name="Yu G."/>
            <person name="Miranda M."/>
            <person name="Quach H.L."/>
            <person name="Tripp M."/>
            <person name="Chang C.H."/>
            <person name="Lee J.M."/>
            <person name="Toriumi M.J."/>
            <person name="Chan M.M."/>
            <person name="Tang C.C."/>
            <person name="Onodera C.S."/>
            <person name="Deng J.M."/>
            <person name="Akiyama K."/>
            <person name="Ansari Y."/>
            <person name="Arakawa T."/>
            <person name="Banh J."/>
            <person name="Banno F."/>
            <person name="Bowser L."/>
            <person name="Brooks S.Y."/>
            <person name="Carninci P."/>
            <person name="Chao Q."/>
            <person name="Choy N."/>
            <person name="Enju A."/>
            <person name="Goldsmith A.D."/>
            <person name="Gurjal M."/>
            <person name="Hansen N.F."/>
            <person name="Hayashizaki Y."/>
            <person name="Johnson-Hopson C."/>
            <person name="Hsuan V.W."/>
            <person name="Iida K."/>
            <person name="Karnes M."/>
            <person name="Khan S."/>
            <person name="Koesema E."/>
            <person name="Ishida J."/>
            <person name="Jiang P.X."/>
            <person name="Jones T."/>
            <person name="Kawai J."/>
            <person name="Kamiya A."/>
            <person name="Meyers C."/>
            <person name="Nakajima M."/>
            <person name="Narusaka M."/>
            <person name="Seki M."/>
            <person name="Sakurai T."/>
            <person name="Satou M."/>
            <person name="Tamse R."/>
            <person name="Vaysberg M."/>
            <person name="Wallender E.K."/>
            <person name="Wong C."/>
            <person name="Yamamura Y."/>
            <person name="Yuan S."/>
            <person name="Shinozaki K."/>
            <person name="Davis R.W."/>
            <person name="Theologis A."/>
            <person name="Ecker J.R."/>
        </authorList>
    </citation>
    <scope>NUCLEOTIDE SEQUENCE [LARGE SCALE MRNA] (ISOFORM 2)</scope>
    <source>
        <strain>cv. Columbia</strain>
    </source>
</reference>
<reference key="4">
    <citation type="submission" date="2005-03" db="EMBL/GenBank/DDBJ databases">
        <title>Large-scale analysis of RIKEN Arabidopsis full-length (RAFL) cDNAs.</title>
        <authorList>
            <person name="Totoki Y."/>
            <person name="Seki M."/>
            <person name="Ishida J."/>
            <person name="Nakajima M."/>
            <person name="Enju A."/>
            <person name="Kamiya A."/>
            <person name="Narusaka M."/>
            <person name="Shin-i T."/>
            <person name="Nakagawa M."/>
            <person name="Sakamoto N."/>
            <person name="Oishi K."/>
            <person name="Kohara Y."/>
            <person name="Kobayashi M."/>
            <person name="Toyoda A."/>
            <person name="Sakaki Y."/>
            <person name="Sakurai T."/>
            <person name="Iida K."/>
            <person name="Akiyama K."/>
            <person name="Satou M."/>
            <person name="Toyoda T."/>
            <person name="Konagaya A."/>
            <person name="Carninci P."/>
            <person name="Kawai J."/>
            <person name="Hayashizaki Y."/>
            <person name="Shinozaki K."/>
        </authorList>
    </citation>
    <scope>NUCLEOTIDE SEQUENCE [LARGE SCALE MRNA] OF 136-245</scope>
    <source>
        <strain>cv. Columbia</strain>
    </source>
</reference>
<reference key="5">
    <citation type="journal article" date="2012" name="Mol. Cell. Proteomics">
        <title>Comparative large-scale characterisation of plant vs. mammal proteins reveals similar and idiosyncratic N-alpha acetylation features.</title>
        <authorList>
            <person name="Bienvenut W.V."/>
            <person name="Sumpton D."/>
            <person name="Martinez A."/>
            <person name="Lilla S."/>
            <person name="Espagne C."/>
            <person name="Meinnel T."/>
            <person name="Giglione C."/>
        </authorList>
    </citation>
    <scope>ACETYLATION [LARGE SCALE ANALYSIS] AT ALA-2 (ISOFORM 2)</scope>
    <scope>CLEAVAGE OF INITIATOR METHIONINE [LARGE SCALE ANALYSIS] (ISOFORM 2)</scope>
    <scope>IDENTIFICATION BY MASS SPECTROMETRY [LARGE SCALE ANALYSIS]</scope>
</reference>
<organism>
    <name type="scientific">Arabidopsis thaliana</name>
    <name type="common">Mouse-ear cress</name>
    <dbReference type="NCBI Taxonomy" id="3702"/>
    <lineage>
        <taxon>Eukaryota</taxon>
        <taxon>Viridiplantae</taxon>
        <taxon>Streptophyta</taxon>
        <taxon>Embryophyta</taxon>
        <taxon>Tracheophyta</taxon>
        <taxon>Spermatophyta</taxon>
        <taxon>Magnoliopsida</taxon>
        <taxon>eudicotyledons</taxon>
        <taxon>Gunneridae</taxon>
        <taxon>Pentapetalae</taxon>
        <taxon>rosids</taxon>
        <taxon>malvids</taxon>
        <taxon>Brassicales</taxon>
        <taxon>Brassicaceae</taxon>
        <taxon>Camelineae</taxon>
        <taxon>Arabidopsis</taxon>
    </lineage>
</organism>
<accession>Q8RYE9</accession>
<accession>Q56YT8</accession>
<accession>Q93Z44</accession>
<proteinExistence type="evidence at protein level"/>
<keyword id="KW-0007">Acetylation</keyword>
<keyword id="KW-0024">Alternative initiation</keyword>
<keyword id="KW-0378">Hydrolase</keyword>
<keyword id="KW-0460">Magnesium</keyword>
<keyword id="KW-0479">Metal-binding</keyword>
<keyword id="KW-1185">Reference proteome</keyword>
<gene>
    <name type="ordered locus">At2g33255</name>
    <name type="ORF">F25I18.1</name>
    <name type="ORF">F4P9.2</name>
</gene>
<protein>
    <recommendedName>
        <fullName>Haloacid dehalogenase-like hydrolase domain-containing protein At2g33255</fullName>
        <ecNumber>3.1.3.-</ecNumber>
    </recommendedName>
</protein>
<feature type="chain" id="PRO_0000424322" description="Haloacid dehalogenase-like hydrolase domain-containing protein At2g33255">
    <location>
        <begin position="1"/>
        <end position="245"/>
    </location>
</feature>
<feature type="active site" description="Nucleophile" evidence="1">
    <location>
        <position position="39"/>
    </location>
</feature>
<feature type="active site" description="Proton donor" evidence="1">
    <location>
        <position position="41"/>
    </location>
</feature>
<feature type="binding site" evidence="1">
    <location>
        <position position="39"/>
    </location>
    <ligand>
        <name>Mg(2+)</name>
        <dbReference type="ChEBI" id="CHEBI:18420"/>
    </ligand>
</feature>
<feature type="binding site" evidence="1">
    <location>
        <position position="41"/>
    </location>
    <ligand>
        <name>Mg(2+)</name>
        <dbReference type="ChEBI" id="CHEBI:18420"/>
    </ligand>
</feature>
<feature type="binding site" evidence="1">
    <location>
        <position position="186"/>
    </location>
    <ligand>
        <name>Mg(2+)</name>
        <dbReference type="ChEBI" id="CHEBI:18420"/>
    </ligand>
</feature>
<feature type="splice variant" id="VSP_057946" description="In isoform 2." evidence="2">
    <location>
        <begin position="1"/>
        <end position="21"/>
    </location>
</feature>
<feature type="initiator methionine" description="Removed" evidence="3">
    <location sequence="Q8RYE9-2">
        <position position="1"/>
    </location>
</feature>
<feature type="modified residue" description="N-acetylalanine" evidence="3">
    <location sequence="Q8RYE9-2">
        <position position="2"/>
    </location>
</feature>
<comment type="cofactor">
    <cofactor evidence="1">
        <name>Mg(2+)</name>
        <dbReference type="ChEBI" id="CHEBI:18420"/>
    </cofactor>
</comment>
<comment type="alternative products">
    <event type="alternative initiation"/>
    <isoform>
        <id>Q8RYE9-1</id>
        <name>1</name>
        <sequence type="displayed"/>
    </isoform>
    <isoform>
        <id>Q8RYE9-2</id>
        <name>2</name>
        <sequence type="described" ref="VSP_057946"/>
    </isoform>
</comment>
<comment type="similarity">
    <text evidence="2">Belongs to the HAD-like hydrolase superfamily. DOG/GPP family.</text>
</comment>
<comment type="sequence caution" evidence="2">
    <conflict type="erroneous initiation">
        <sequence resource="EMBL-CDS" id="BAD93834"/>
    </conflict>
    <text>Truncated N-terminus.</text>
</comment>
<sequence length="245" mass="27497">MTFLLSRTFISLTLRPSCSISMANLTTNAKTRLRGVVFDMDGTLTVPVIDFAAMYRAVLGEDAYKRIKAESPSGIDILHHIESWSPDKQQKAYEIIADYEKQGIDKLQIMPGTAELCGFLDSKKIKRGLITRNVQKAIDIFHQRFEVIFSPALGREFRPYKPNPDPLLHICSTWDIQPNEVMMVGDSLKDDIACGKRAGAFTCLLDETGRYGPDDFSVSGLQPDFKVDSLSKIQNLLETNFDLNP</sequence>
<name>GPPL3_ARATH</name>
<dbReference type="EC" id="3.1.3.-"/>
<dbReference type="EMBL" id="AC002332">
    <property type="protein sequence ID" value="AAM14804.1"/>
    <property type="molecule type" value="Genomic_DNA"/>
</dbReference>
<dbReference type="EMBL" id="AC002334">
    <property type="protein sequence ID" value="AAM14806.1"/>
    <property type="molecule type" value="Genomic_DNA"/>
</dbReference>
<dbReference type="EMBL" id="CP002685">
    <property type="protein sequence ID" value="AEC08806.1"/>
    <property type="molecule type" value="Genomic_DNA"/>
</dbReference>
<dbReference type="EMBL" id="AY058145">
    <property type="protein sequence ID" value="AAL25561.1"/>
    <property type="molecule type" value="mRNA"/>
</dbReference>
<dbReference type="EMBL" id="AY093716">
    <property type="protein sequence ID" value="AAM10340.1"/>
    <property type="molecule type" value="mRNA"/>
</dbReference>
<dbReference type="EMBL" id="AK221233">
    <property type="protein sequence ID" value="BAD93834.1"/>
    <property type="status" value="ALT_INIT"/>
    <property type="molecule type" value="mRNA"/>
</dbReference>
<dbReference type="RefSeq" id="NP_850204.2">
    <molecule id="Q8RYE9-1"/>
    <property type="nucleotide sequence ID" value="NM_179873.3"/>
</dbReference>
<dbReference type="SMR" id="Q8RYE9"/>
<dbReference type="FunCoup" id="Q8RYE9">
    <property type="interactions" value="772"/>
</dbReference>
<dbReference type="STRING" id="3702.Q8RYE9"/>
<dbReference type="iPTMnet" id="Q8RYE9"/>
<dbReference type="PaxDb" id="3702-AT2G33255.1"/>
<dbReference type="ProteomicsDB" id="220640">
    <molecule id="Q8RYE9-1"/>
</dbReference>
<dbReference type="EnsemblPlants" id="AT2G33255.1">
    <molecule id="Q8RYE9-1"/>
    <property type="protein sequence ID" value="AT2G33255.1"/>
    <property type="gene ID" value="AT2G33255"/>
</dbReference>
<dbReference type="GeneID" id="817888"/>
<dbReference type="Gramene" id="AT2G33255.1">
    <molecule id="Q8RYE9-1"/>
    <property type="protein sequence ID" value="AT2G33255.1"/>
    <property type="gene ID" value="AT2G33255"/>
</dbReference>
<dbReference type="KEGG" id="ath:AT2G33255"/>
<dbReference type="Araport" id="AT2G33255"/>
<dbReference type="TAIR" id="AT2G33255"/>
<dbReference type="eggNOG" id="ENOG502QR7R">
    <property type="taxonomic scope" value="Eukaryota"/>
</dbReference>
<dbReference type="HOGENOM" id="CLU_045011_11_2_1"/>
<dbReference type="InParanoid" id="Q8RYE9"/>
<dbReference type="OMA" id="QTYMFKE"/>
<dbReference type="PhylomeDB" id="Q8RYE9"/>
<dbReference type="PRO" id="PR:Q8RYE9"/>
<dbReference type="Proteomes" id="UP000006548">
    <property type="component" value="Chromosome 2"/>
</dbReference>
<dbReference type="ExpressionAtlas" id="Q8RYE9">
    <property type="expression patterns" value="baseline and differential"/>
</dbReference>
<dbReference type="GO" id="GO:0009507">
    <property type="term" value="C:chloroplast"/>
    <property type="evidence" value="ECO:0007005"/>
    <property type="project" value="TAIR"/>
</dbReference>
<dbReference type="GO" id="GO:0005829">
    <property type="term" value="C:cytosol"/>
    <property type="evidence" value="ECO:0007005"/>
    <property type="project" value="TAIR"/>
</dbReference>
<dbReference type="GO" id="GO:0005783">
    <property type="term" value="C:endoplasmic reticulum"/>
    <property type="evidence" value="ECO:0007005"/>
    <property type="project" value="TAIR"/>
</dbReference>
<dbReference type="GO" id="GO:0016787">
    <property type="term" value="F:hydrolase activity"/>
    <property type="evidence" value="ECO:0007669"/>
    <property type="project" value="UniProtKB-KW"/>
</dbReference>
<dbReference type="GO" id="GO:0046872">
    <property type="term" value="F:metal ion binding"/>
    <property type="evidence" value="ECO:0007669"/>
    <property type="project" value="UniProtKB-KW"/>
</dbReference>
<dbReference type="FunFam" id="1.10.260.80:FF:000001">
    <property type="entry name" value="Haloacid dehalogenase-like hydrolase domain-containing protein"/>
    <property type="match status" value="1"/>
</dbReference>
<dbReference type="FunFam" id="3.40.50.1000:FF:000113">
    <property type="entry name" value="Putative haloacid dehalogenase-like hydrolase"/>
    <property type="match status" value="1"/>
</dbReference>
<dbReference type="Gene3D" id="1.10.260.80">
    <property type="match status" value="1"/>
</dbReference>
<dbReference type="Gene3D" id="3.40.50.1000">
    <property type="entry name" value="HAD superfamily/HAD-like"/>
    <property type="match status" value="1"/>
</dbReference>
<dbReference type="InterPro" id="IPR036412">
    <property type="entry name" value="HAD-like_sf"/>
</dbReference>
<dbReference type="InterPro" id="IPR006439">
    <property type="entry name" value="HAD-SF_hydro_IA"/>
</dbReference>
<dbReference type="InterPro" id="IPR023214">
    <property type="entry name" value="HAD_sf"/>
</dbReference>
<dbReference type="NCBIfam" id="TIGR01549">
    <property type="entry name" value="HAD-SF-IA-v1"/>
    <property type="match status" value="1"/>
</dbReference>
<dbReference type="PANTHER" id="PTHR43885">
    <property type="entry name" value="HALOACID DEHALOGENASE-LIKE HYDROLASE"/>
    <property type="match status" value="1"/>
</dbReference>
<dbReference type="PANTHER" id="PTHR43885:SF1">
    <property type="entry name" value="SUPERFAMILY HYDROLASE, PUTATIVE (AFU_ORTHOLOGUE AFUA_4G13290)-RELATED"/>
    <property type="match status" value="1"/>
</dbReference>
<dbReference type="Pfam" id="PF00702">
    <property type="entry name" value="Hydrolase"/>
    <property type="match status" value="1"/>
</dbReference>
<dbReference type="SFLD" id="SFLDG01129">
    <property type="entry name" value="C1.5:_HAD__Beta-PGM__Phosphata"/>
    <property type="match status" value="1"/>
</dbReference>
<dbReference type="SFLD" id="SFLDS00003">
    <property type="entry name" value="Haloacid_Dehalogenase"/>
    <property type="match status" value="1"/>
</dbReference>
<dbReference type="SUPFAM" id="SSF56784">
    <property type="entry name" value="HAD-like"/>
    <property type="match status" value="1"/>
</dbReference>